<sequence length="368" mass="41219">MSNPTSTPRADGFRMPAEWEPHEQTWMVWPERPDNWRNGGKPAQAAFAAVAKAIARFEPVTVCASAGQYENARARLDDGNIRVVEISSDDAWVRDTGPTFVIDDKGDVRGVDWGFNAWGGFEGGLYFPWQRDDQVARKILEIERRARYRTDDFVLEGGSIHVDGEGTLITTEECLLNHNRNPHLSQAEIERTLRDYLAVESIIWLPNGLYNDETDGHVDNFCCYVRPGEVLLAWTDDQDDPNYLRCQAALRVLEESRDAKGRKLVVHKMPIPGPLYATQEECDGVDIVEGSQPRDPSIRLAGSYVNFLIVNGGIIAPSFDDPKDAEARAILQRVFPEHEVVMVPGREILLGGGNIHCITQQQPAPRKA</sequence>
<accession>B7V2K4</accession>
<feature type="chain" id="PRO_1000188414" description="Agmatine deiminase">
    <location>
        <begin position="1"/>
        <end position="368"/>
    </location>
</feature>
<feature type="active site" description="Amidino-cysteine intermediate" evidence="1">
    <location>
        <position position="357"/>
    </location>
</feature>
<name>AGUA_PSEA8</name>
<protein>
    <recommendedName>
        <fullName evidence="1">Agmatine deiminase</fullName>
        <ecNumber evidence="1">3.5.3.12</ecNumber>
    </recommendedName>
    <alternativeName>
        <fullName evidence="1">Agmatine iminohydrolase</fullName>
    </alternativeName>
</protein>
<dbReference type="EC" id="3.5.3.12" evidence="1"/>
<dbReference type="EMBL" id="FM209186">
    <property type="protein sequence ID" value="CAW25015.1"/>
    <property type="molecule type" value="Genomic_DNA"/>
</dbReference>
<dbReference type="RefSeq" id="WP_003118139.1">
    <property type="nucleotide sequence ID" value="NC_011770.1"/>
</dbReference>
<dbReference type="SMR" id="B7V2K4"/>
<dbReference type="KEGG" id="pag:PLES_02881"/>
<dbReference type="HOGENOM" id="CLU_037682_1_0_6"/>
<dbReference type="UniPathway" id="UPA00534">
    <property type="reaction ID" value="UER00285"/>
</dbReference>
<dbReference type="GO" id="GO:0047632">
    <property type="term" value="F:agmatine deiminase activity"/>
    <property type="evidence" value="ECO:0007669"/>
    <property type="project" value="UniProtKB-UniRule"/>
</dbReference>
<dbReference type="GO" id="GO:0004668">
    <property type="term" value="F:protein-arginine deiminase activity"/>
    <property type="evidence" value="ECO:0007669"/>
    <property type="project" value="InterPro"/>
</dbReference>
<dbReference type="GO" id="GO:0033388">
    <property type="term" value="P:putrescine biosynthetic process from arginine"/>
    <property type="evidence" value="ECO:0007669"/>
    <property type="project" value="UniProtKB-UniRule"/>
</dbReference>
<dbReference type="FunFam" id="3.75.10.10:FF:000012">
    <property type="entry name" value="Agmatine deiminase"/>
    <property type="match status" value="1"/>
</dbReference>
<dbReference type="Gene3D" id="3.75.10.10">
    <property type="entry name" value="L-arginine/glycine Amidinotransferase, Chain A"/>
    <property type="match status" value="1"/>
</dbReference>
<dbReference type="HAMAP" id="MF_01841">
    <property type="entry name" value="Agmatine_deimin"/>
    <property type="match status" value="1"/>
</dbReference>
<dbReference type="InterPro" id="IPR017754">
    <property type="entry name" value="Agmatine_deiminase"/>
</dbReference>
<dbReference type="InterPro" id="IPR007466">
    <property type="entry name" value="Peptidyl-Arg-deiminase_porph"/>
</dbReference>
<dbReference type="NCBIfam" id="TIGR03380">
    <property type="entry name" value="agmatine_aguA"/>
    <property type="match status" value="1"/>
</dbReference>
<dbReference type="NCBIfam" id="NF010070">
    <property type="entry name" value="PRK13551.1"/>
    <property type="match status" value="1"/>
</dbReference>
<dbReference type="PANTHER" id="PTHR31377">
    <property type="entry name" value="AGMATINE DEIMINASE-RELATED"/>
    <property type="match status" value="1"/>
</dbReference>
<dbReference type="PANTHER" id="PTHR31377:SF0">
    <property type="entry name" value="AGMATINE DEIMINASE-RELATED"/>
    <property type="match status" value="1"/>
</dbReference>
<dbReference type="Pfam" id="PF04371">
    <property type="entry name" value="PAD_porph"/>
    <property type="match status" value="1"/>
</dbReference>
<dbReference type="SUPFAM" id="SSF55909">
    <property type="entry name" value="Pentein"/>
    <property type="match status" value="1"/>
</dbReference>
<evidence type="ECO:0000255" key="1">
    <source>
        <dbReference type="HAMAP-Rule" id="MF_01841"/>
    </source>
</evidence>
<organism>
    <name type="scientific">Pseudomonas aeruginosa (strain LESB58)</name>
    <dbReference type="NCBI Taxonomy" id="557722"/>
    <lineage>
        <taxon>Bacteria</taxon>
        <taxon>Pseudomonadati</taxon>
        <taxon>Pseudomonadota</taxon>
        <taxon>Gammaproteobacteria</taxon>
        <taxon>Pseudomonadales</taxon>
        <taxon>Pseudomonadaceae</taxon>
        <taxon>Pseudomonas</taxon>
    </lineage>
</organism>
<keyword id="KW-0378">Hydrolase</keyword>
<keyword id="KW-0620">Polyamine biosynthesis</keyword>
<gene>
    <name evidence="1" type="primary">aguA</name>
    <name type="ordered locus">PLES_02881</name>
</gene>
<comment type="function">
    <text evidence="1">Mediates the hydrolysis of agmatine into N-carbamoylputrescine in the arginine decarboxylase (ADC) pathway of putrescine biosynthesis, a basic polyamine.</text>
</comment>
<comment type="catalytic activity">
    <reaction evidence="1">
        <text>agmatine + H2O = N-carbamoylputrescine + NH4(+)</text>
        <dbReference type="Rhea" id="RHEA:18037"/>
        <dbReference type="ChEBI" id="CHEBI:15377"/>
        <dbReference type="ChEBI" id="CHEBI:28938"/>
        <dbReference type="ChEBI" id="CHEBI:58145"/>
        <dbReference type="ChEBI" id="CHEBI:58318"/>
        <dbReference type="EC" id="3.5.3.12"/>
    </reaction>
</comment>
<comment type="pathway">
    <text evidence="1">Amine and polyamine biosynthesis; putrescine biosynthesis via agmatine pathway; N-carbamoylputrescine from agmatine: step 1/1.</text>
</comment>
<comment type="subunit">
    <text evidence="1">Homodimer.</text>
</comment>
<comment type="similarity">
    <text evidence="1">Belongs to the agmatine deiminase family.</text>
</comment>
<reference key="1">
    <citation type="journal article" date="2009" name="Genome Res.">
        <title>Newly introduced genomic prophage islands are critical determinants of in vivo competitiveness in the Liverpool epidemic strain of Pseudomonas aeruginosa.</title>
        <authorList>
            <person name="Winstanley C."/>
            <person name="Langille M.G.I."/>
            <person name="Fothergill J.L."/>
            <person name="Kukavica-Ibrulj I."/>
            <person name="Paradis-Bleau C."/>
            <person name="Sanschagrin F."/>
            <person name="Thomson N.R."/>
            <person name="Winsor G.L."/>
            <person name="Quail M.A."/>
            <person name="Lennard N."/>
            <person name="Bignell A."/>
            <person name="Clarke L."/>
            <person name="Seeger K."/>
            <person name="Saunders D."/>
            <person name="Harris D."/>
            <person name="Parkhill J."/>
            <person name="Hancock R.E.W."/>
            <person name="Brinkman F.S.L."/>
            <person name="Levesque R.C."/>
        </authorList>
    </citation>
    <scope>NUCLEOTIDE SEQUENCE [LARGE SCALE GENOMIC DNA]</scope>
    <source>
        <strain>LESB58</strain>
    </source>
</reference>
<proteinExistence type="inferred from homology"/>